<organismHost>
    <name type="scientific">Bos taurus</name>
    <name type="common">Bovine</name>
    <dbReference type="NCBI Taxonomy" id="9913"/>
</organismHost>
<gene>
    <name type="ordered locus">VACWR164</name>
</gene>
<evidence type="ECO:0000255" key="1">
    <source>
        <dbReference type="PROSITE-ProRule" id="PRU00352"/>
    </source>
</evidence>
<evidence type="ECO:0000305" key="2"/>
<accession>Q76ZN8</accession>
<reference key="1">
    <citation type="submission" date="2003-02" db="EMBL/GenBank/DDBJ databases">
        <title>Sequencing of the coding region of Vaccinia-WR to an average 9-fold redundancy and an error rate of 0.16/10kb.</title>
        <authorList>
            <person name="Esposito J.J."/>
            <person name="Frace A.M."/>
            <person name="Sammons S.A."/>
            <person name="Olsen-Rasmussen M."/>
            <person name="Osborne J."/>
            <person name="Wohlhueter R."/>
        </authorList>
    </citation>
    <scope>NUCLEOTIDE SEQUENCE [LARGE SCALE GENOMIC DNA]</scope>
</reference>
<comment type="miscellaneous">
    <text>The WR equivalent of the semaphorin-like protein is split into two ORFs which are likely to be truncated and non-functional. This ORF is the C-terminal one.</text>
</comment>
<comment type="similarity">
    <text evidence="2">Belongs to the semaphorin family.</text>
</comment>
<name>SEMA2_VACCW</name>
<sequence length="142" mass="16133">MNTIKQSFSTSKLEGYTKQLPSPAPGICLPAGKVVPHTTFEVIEKYNVLDDIIKPLSNQPIFEGPSGVKWFDIKEKENEHREYRIYFIKENSIYSFDTKSKQTRSSQVDARLFSVMVTSKPLFIADIGIGVGMPQMKKILKM</sequence>
<organism>
    <name type="scientific">Vaccinia virus (strain Western Reserve)</name>
    <name type="common">VACV</name>
    <name type="synonym">Vaccinia virus (strain WR)</name>
    <dbReference type="NCBI Taxonomy" id="10254"/>
    <lineage>
        <taxon>Viruses</taxon>
        <taxon>Varidnaviria</taxon>
        <taxon>Bamfordvirae</taxon>
        <taxon>Nucleocytoviricota</taxon>
        <taxon>Pokkesviricetes</taxon>
        <taxon>Chitovirales</taxon>
        <taxon>Poxviridae</taxon>
        <taxon>Chordopoxvirinae</taxon>
        <taxon>Orthopoxvirus</taxon>
        <taxon>Vaccinia virus</taxon>
    </lineage>
</organism>
<protein>
    <recommendedName>
        <fullName>Semaphorin-like protein VACWR164</fullName>
    </recommendedName>
</protein>
<keyword id="KW-1185">Reference proteome</keyword>
<proteinExistence type="inferred from homology"/>
<dbReference type="EMBL" id="AY243312">
    <property type="protein sequence ID" value="AAO89443.1"/>
    <property type="molecule type" value="Genomic_DNA"/>
</dbReference>
<dbReference type="PIR" id="JQ1776">
    <property type="entry name" value="JQ1776"/>
</dbReference>
<dbReference type="RefSeq" id="YP_233046.1">
    <property type="nucleotide sequence ID" value="NC_006998.1"/>
</dbReference>
<dbReference type="SMR" id="Q76ZN8"/>
<dbReference type="DNASU" id="3707694"/>
<dbReference type="GeneID" id="3707694"/>
<dbReference type="KEGG" id="vg:3707694"/>
<dbReference type="Proteomes" id="UP000000344">
    <property type="component" value="Genome"/>
</dbReference>
<dbReference type="Gene3D" id="2.130.10.10">
    <property type="entry name" value="YVTN repeat-like/Quinoprotein amine dehydrogenase"/>
    <property type="match status" value="1"/>
</dbReference>
<dbReference type="InterPro" id="IPR001627">
    <property type="entry name" value="Semap_dom"/>
</dbReference>
<dbReference type="InterPro" id="IPR036352">
    <property type="entry name" value="Semap_dom_sf"/>
</dbReference>
<dbReference type="InterPro" id="IPR015943">
    <property type="entry name" value="WD40/YVTN_repeat-like_dom_sf"/>
</dbReference>
<dbReference type="SUPFAM" id="SSF101912">
    <property type="entry name" value="Sema domain"/>
    <property type="match status" value="1"/>
</dbReference>
<dbReference type="PROSITE" id="PS51004">
    <property type="entry name" value="SEMA"/>
    <property type="match status" value="1"/>
</dbReference>
<feature type="chain" id="PRO_0000418527" description="Semaphorin-like protein VACWR164">
    <location>
        <begin position="1"/>
        <end position="142"/>
    </location>
</feature>
<feature type="domain" description="Sema" evidence="1">
    <location>
        <begin position="1"/>
        <end position="142"/>
    </location>
</feature>